<proteinExistence type="inferred from homology"/>
<accession>B3QM31</accession>
<gene>
    <name evidence="1" type="primary">gcvH</name>
    <name type="ordered locus">Cpar_0562</name>
</gene>
<feature type="chain" id="PRO_1000114507" description="Glycine cleavage system H protein">
    <location>
        <begin position="1"/>
        <end position="127"/>
    </location>
</feature>
<feature type="domain" description="Lipoyl-binding" evidence="2">
    <location>
        <begin position="24"/>
        <end position="105"/>
    </location>
</feature>
<feature type="modified residue" description="N6-lipoyllysine" evidence="1">
    <location>
        <position position="65"/>
    </location>
</feature>
<name>GCSH_CHLP8</name>
<sequence>MNIPDNLRYTKDHEWLQLLDDGVTAVVGITDFAQSELGDIVFVETKPVGTKVAAHGAFGTVEAVKTVADLFAPVAGEIVEVNGALDDAAIVNSDPYNEGWIVKMKLDNAAEVESLLSPADYSALIGE</sequence>
<protein>
    <recommendedName>
        <fullName evidence="1">Glycine cleavage system H protein</fullName>
    </recommendedName>
</protein>
<keyword id="KW-0450">Lipoyl</keyword>
<reference key="1">
    <citation type="submission" date="2008-06" db="EMBL/GenBank/DDBJ databases">
        <title>Complete sequence of Chlorobaculum parvum NCIB 8327.</title>
        <authorList>
            <consortium name="US DOE Joint Genome Institute"/>
            <person name="Lucas S."/>
            <person name="Copeland A."/>
            <person name="Lapidus A."/>
            <person name="Glavina del Rio T."/>
            <person name="Dalin E."/>
            <person name="Tice H."/>
            <person name="Bruce D."/>
            <person name="Goodwin L."/>
            <person name="Pitluck S."/>
            <person name="Schmutz J."/>
            <person name="Larimer F."/>
            <person name="Land M."/>
            <person name="Hauser L."/>
            <person name="Kyrpides N."/>
            <person name="Mikhailova N."/>
            <person name="Zhao F."/>
            <person name="Li T."/>
            <person name="Liu Z."/>
            <person name="Overmann J."/>
            <person name="Bryant D.A."/>
            <person name="Richardson P."/>
        </authorList>
    </citation>
    <scope>NUCLEOTIDE SEQUENCE [LARGE SCALE GENOMIC DNA]</scope>
    <source>
        <strain>DSM 263 / NCIMB 8327</strain>
    </source>
</reference>
<evidence type="ECO:0000255" key="1">
    <source>
        <dbReference type="HAMAP-Rule" id="MF_00272"/>
    </source>
</evidence>
<evidence type="ECO:0000255" key="2">
    <source>
        <dbReference type="PROSITE-ProRule" id="PRU01066"/>
    </source>
</evidence>
<organism>
    <name type="scientific">Chlorobaculum parvum (strain DSM 263 / NCIMB 8327)</name>
    <name type="common">Chlorobium vibrioforme subsp. thiosulfatophilum</name>
    <dbReference type="NCBI Taxonomy" id="517417"/>
    <lineage>
        <taxon>Bacteria</taxon>
        <taxon>Pseudomonadati</taxon>
        <taxon>Chlorobiota</taxon>
        <taxon>Chlorobiia</taxon>
        <taxon>Chlorobiales</taxon>
        <taxon>Chlorobiaceae</taxon>
        <taxon>Chlorobaculum</taxon>
    </lineage>
</organism>
<dbReference type="EMBL" id="CP001099">
    <property type="protein sequence ID" value="ACF10984.1"/>
    <property type="molecule type" value="Genomic_DNA"/>
</dbReference>
<dbReference type="RefSeq" id="WP_012501817.1">
    <property type="nucleotide sequence ID" value="NC_011027.1"/>
</dbReference>
<dbReference type="SMR" id="B3QM31"/>
<dbReference type="STRING" id="517417.Cpar_0562"/>
<dbReference type="KEGG" id="cpc:Cpar_0562"/>
<dbReference type="eggNOG" id="COG0509">
    <property type="taxonomic scope" value="Bacteria"/>
</dbReference>
<dbReference type="HOGENOM" id="CLU_097408_2_2_10"/>
<dbReference type="OrthoDB" id="9796712at2"/>
<dbReference type="Proteomes" id="UP000008811">
    <property type="component" value="Chromosome"/>
</dbReference>
<dbReference type="GO" id="GO:0005737">
    <property type="term" value="C:cytoplasm"/>
    <property type="evidence" value="ECO:0007669"/>
    <property type="project" value="TreeGrafter"/>
</dbReference>
<dbReference type="GO" id="GO:0005960">
    <property type="term" value="C:glycine cleavage complex"/>
    <property type="evidence" value="ECO:0007669"/>
    <property type="project" value="InterPro"/>
</dbReference>
<dbReference type="GO" id="GO:0019464">
    <property type="term" value="P:glycine decarboxylation via glycine cleavage system"/>
    <property type="evidence" value="ECO:0007669"/>
    <property type="project" value="UniProtKB-UniRule"/>
</dbReference>
<dbReference type="CDD" id="cd06848">
    <property type="entry name" value="GCS_H"/>
    <property type="match status" value="1"/>
</dbReference>
<dbReference type="Gene3D" id="2.40.50.100">
    <property type="match status" value="1"/>
</dbReference>
<dbReference type="HAMAP" id="MF_00272">
    <property type="entry name" value="GcvH"/>
    <property type="match status" value="1"/>
</dbReference>
<dbReference type="InterPro" id="IPR003016">
    <property type="entry name" value="2-oxoA_DH_lipoyl-BS"/>
</dbReference>
<dbReference type="InterPro" id="IPR000089">
    <property type="entry name" value="Biotin_lipoyl"/>
</dbReference>
<dbReference type="InterPro" id="IPR002930">
    <property type="entry name" value="GCV_H"/>
</dbReference>
<dbReference type="InterPro" id="IPR033753">
    <property type="entry name" value="GCV_H/Fam206"/>
</dbReference>
<dbReference type="InterPro" id="IPR017453">
    <property type="entry name" value="GCV_H_sub"/>
</dbReference>
<dbReference type="InterPro" id="IPR011053">
    <property type="entry name" value="Single_hybrid_motif"/>
</dbReference>
<dbReference type="NCBIfam" id="TIGR00527">
    <property type="entry name" value="gcvH"/>
    <property type="match status" value="1"/>
</dbReference>
<dbReference type="NCBIfam" id="NF002270">
    <property type="entry name" value="PRK01202.1"/>
    <property type="match status" value="1"/>
</dbReference>
<dbReference type="PANTHER" id="PTHR11715">
    <property type="entry name" value="GLYCINE CLEAVAGE SYSTEM H PROTEIN"/>
    <property type="match status" value="1"/>
</dbReference>
<dbReference type="PANTHER" id="PTHR11715:SF3">
    <property type="entry name" value="GLYCINE CLEAVAGE SYSTEM H PROTEIN-RELATED"/>
    <property type="match status" value="1"/>
</dbReference>
<dbReference type="Pfam" id="PF01597">
    <property type="entry name" value="GCV_H"/>
    <property type="match status" value="1"/>
</dbReference>
<dbReference type="SUPFAM" id="SSF51230">
    <property type="entry name" value="Single hybrid motif"/>
    <property type="match status" value="1"/>
</dbReference>
<dbReference type="PROSITE" id="PS50968">
    <property type="entry name" value="BIOTINYL_LIPOYL"/>
    <property type="match status" value="1"/>
</dbReference>
<dbReference type="PROSITE" id="PS00189">
    <property type="entry name" value="LIPOYL"/>
    <property type="match status" value="1"/>
</dbReference>
<comment type="function">
    <text evidence="1">The glycine cleavage system catalyzes the degradation of glycine. The H protein shuttles the methylamine group of glycine from the P protein to the T protein.</text>
</comment>
<comment type="cofactor">
    <cofactor evidence="1">
        <name>(R)-lipoate</name>
        <dbReference type="ChEBI" id="CHEBI:83088"/>
    </cofactor>
    <text evidence="1">Binds 1 lipoyl cofactor covalently.</text>
</comment>
<comment type="subunit">
    <text evidence="1">The glycine cleavage system is composed of four proteins: P, T, L and H.</text>
</comment>
<comment type="similarity">
    <text evidence="1">Belongs to the GcvH family.</text>
</comment>